<organism>
    <name type="scientific">Saccharolobus islandicus (strain M.14.25 / Kamchatka #1)</name>
    <name type="common">Sulfolobus islandicus</name>
    <dbReference type="NCBI Taxonomy" id="427317"/>
    <lineage>
        <taxon>Archaea</taxon>
        <taxon>Thermoproteota</taxon>
        <taxon>Thermoprotei</taxon>
        <taxon>Sulfolobales</taxon>
        <taxon>Sulfolobaceae</taxon>
        <taxon>Saccharolobus</taxon>
    </lineage>
</organism>
<gene>
    <name type="ordered locus">M1425_0048</name>
</gene>
<sequence>MVTIALGSRNPVKINATKEALDVLKLNWDLIGIEVDNGVDKQPFCDQTYVGARNRALNVIRVTNADIGLGIEGGVCNVYGKFIANAVVYVITKEGLENFAISSSFTLPSSMVSLILQGKELGEASDIIFKTNNSKTKEGAIGLLTNNVINRKMLYVQPIVLALYPIYNTMINNTPF</sequence>
<proteinExistence type="inferred from homology"/>
<comment type="function">
    <text evidence="1">Phosphatase that hydrolyzes non-canonical purine nucleotides such as XTP and ITP to their respective diphosphate derivatives. Probably excludes non-canonical purines from DNA/RNA precursor pool, thus preventing their incorporation into DNA/RNA and avoiding chromosomal lesions.</text>
</comment>
<comment type="catalytic activity">
    <reaction evidence="1">
        <text>XTP + H2O = XDP + phosphate + H(+)</text>
        <dbReference type="Rhea" id="RHEA:28406"/>
        <dbReference type="ChEBI" id="CHEBI:15377"/>
        <dbReference type="ChEBI" id="CHEBI:15378"/>
        <dbReference type="ChEBI" id="CHEBI:43474"/>
        <dbReference type="ChEBI" id="CHEBI:59884"/>
        <dbReference type="ChEBI" id="CHEBI:61314"/>
        <dbReference type="EC" id="3.6.1.73"/>
    </reaction>
</comment>
<comment type="catalytic activity">
    <reaction evidence="1">
        <text>ITP + H2O = IDP + phosphate + H(+)</text>
        <dbReference type="Rhea" id="RHEA:28330"/>
        <dbReference type="ChEBI" id="CHEBI:15377"/>
        <dbReference type="ChEBI" id="CHEBI:15378"/>
        <dbReference type="ChEBI" id="CHEBI:43474"/>
        <dbReference type="ChEBI" id="CHEBI:58280"/>
        <dbReference type="ChEBI" id="CHEBI:61402"/>
        <dbReference type="EC" id="3.6.1.73"/>
    </reaction>
</comment>
<comment type="cofactor">
    <cofactor evidence="1">
        <name>Mg(2+)</name>
        <dbReference type="ChEBI" id="CHEBI:18420"/>
    </cofactor>
    <cofactor evidence="1">
        <name>Mn(2+)</name>
        <dbReference type="ChEBI" id="CHEBI:29035"/>
    </cofactor>
    <text evidence="1">Binds 1 divalent metal cation per subunit; can use either Mg(2+) or Mn(2+).</text>
</comment>
<comment type="subunit">
    <text evidence="1">Homodimer.</text>
</comment>
<comment type="similarity">
    <text evidence="1">Belongs to the YjjX NTPase family.</text>
</comment>
<reference key="1">
    <citation type="journal article" date="2009" name="Proc. Natl. Acad. Sci. U.S.A.">
        <title>Biogeography of the Sulfolobus islandicus pan-genome.</title>
        <authorList>
            <person name="Reno M.L."/>
            <person name="Held N.L."/>
            <person name="Fields C.J."/>
            <person name="Burke P.V."/>
            <person name="Whitaker R.J."/>
        </authorList>
    </citation>
    <scope>NUCLEOTIDE SEQUENCE [LARGE SCALE GENOMIC DNA]</scope>
    <source>
        <strain>M.14.25 / Kamchatka #1</strain>
    </source>
</reference>
<name>NCPP_SACI4</name>
<dbReference type="EC" id="3.6.1.73" evidence="1"/>
<dbReference type="EMBL" id="CP001400">
    <property type="protein sequence ID" value="ACP36940.1"/>
    <property type="molecule type" value="Genomic_DNA"/>
</dbReference>
<dbReference type="RefSeq" id="WP_012710227.1">
    <property type="nucleotide sequence ID" value="NC_012588.1"/>
</dbReference>
<dbReference type="SMR" id="C3MTQ6"/>
<dbReference type="GeneID" id="7795426"/>
<dbReference type="KEGG" id="sia:M1425_0048"/>
<dbReference type="HOGENOM" id="CLU_087417_0_0_2"/>
<dbReference type="Proteomes" id="UP000001350">
    <property type="component" value="Chromosome"/>
</dbReference>
<dbReference type="GO" id="GO:0103023">
    <property type="term" value="F:ITPase activity"/>
    <property type="evidence" value="ECO:0007669"/>
    <property type="project" value="UniProtKB-EC"/>
</dbReference>
<dbReference type="GO" id="GO:0046872">
    <property type="term" value="F:metal ion binding"/>
    <property type="evidence" value="ECO:0007669"/>
    <property type="project" value="UniProtKB-KW"/>
</dbReference>
<dbReference type="GO" id="GO:0000166">
    <property type="term" value="F:nucleotide binding"/>
    <property type="evidence" value="ECO:0007669"/>
    <property type="project" value="UniProtKB-KW"/>
</dbReference>
<dbReference type="GO" id="GO:0017111">
    <property type="term" value="F:ribonucleoside triphosphate phosphatase activity"/>
    <property type="evidence" value="ECO:0000250"/>
    <property type="project" value="UniProtKB"/>
</dbReference>
<dbReference type="GO" id="GO:0009117">
    <property type="term" value="P:nucleotide metabolic process"/>
    <property type="evidence" value="ECO:0007669"/>
    <property type="project" value="UniProtKB-KW"/>
</dbReference>
<dbReference type="GO" id="GO:0006772">
    <property type="term" value="P:thiamine metabolic process"/>
    <property type="evidence" value="ECO:0007669"/>
    <property type="project" value="TreeGrafter"/>
</dbReference>
<dbReference type="FunFam" id="3.90.950.10:FF:000002">
    <property type="entry name" value="Inosine/xanthosine triphosphatase"/>
    <property type="match status" value="1"/>
</dbReference>
<dbReference type="Gene3D" id="3.90.950.10">
    <property type="match status" value="1"/>
</dbReference>
<dbReference type="HAMAP" id="MF_00648">
    <property type="entry name" value="Non_canon_purine_NTPase_YjjX"/>
    <property type="match status" value="1"/>
</dbReference>
<dbReference type="InterPro" id="IPR029001">
    <property type="entry name" value="ITPase-like_fam"/>
</dbReference>
<dbReference type="InterPro" id="IPR002786">
    <property type="entry name" value="Non_canon_purine_NTPase"/>
</dbReference>
<dbReference type="InterPro" id="IPR026533">
    <property type="entry name" value="NTPase/PRRC1"/>
</dbReference>
<dbReference type="InterPro" id="IPR050299">
    <property type="entry name" value="YjjX_NTPase"/>
</dbReference>
<dbReference type="PANTHER" id="PTHR34699">
    <property type="match status" value="1"/>
</dbReference>
<dbReference type="PANTHER" id="PTHR34699:SF2">
    <property type="entry name" value="NON-CANONICAL PURINE NTP PHOSPHATASE_PRRC1 DOMAIN-CONTAINING PROTEIN"/>
    <property type="match status" value="1"/>
</dbReference>
<dbReference type="Pfam" id="PF01931">
    <property type="entry name" value="NTPase_I-T"/>
    <property type="match status" value="1"/>
</dbReference>
<dbReference type="SUPFAM" id="SSF52972">
    <property type="entry name" value="ITPase-like"/>
    <property type="match status" value="1"/>
</dbReference>
<protein>
    <recommendedName>
        <fullName evidence="1">Probable inosine/xanthosine triphosphatase</fullName>
        <shortName evidence="1">ITPase/XTPase</shortName>
        <ecNumber evidence="1">3.6.1.73</ecNumber>
    </recommendedName>
    <alternativeName>
        <fullName evidence="1">Non-canonical purine NTP phosphatase</fullName>
    </alternativeName>
    <alternativeName>
        <fullName evidence="1">Non-standard purine NTP phosphatase</fullName>
    </alternativeName>
    <alternativeName>
        <fullName evidence="1">Nucleoside-triphosphate phosphatase</fullName>
        <shortName evidence="1">NTPase</shortName>
    </alternativeName>
</protein>
<keyword id="KW-0378">Hydrolase</keyword>
<keyword id="KW-0460">Magnesium</keyword>
<keyword id="KW-0464">Manganese</keyword>
<keyword id="KW-0479">Metal-binding</keyword>
<keyword id="KW-0546">Nucleotide metabolism</keyword>
<keyword id="KW-0547">Nucleotide-binding</keyword>
<evidence type="ECO:0000255" key="1">
    <source>
        <dbReference type="HAMAP-Rule" id="MF_00648"/>
    </source>
</evidence>
<accession>C3MTQ6</accession>
<feature type="chain" id="PRO_1000212394" description="Probable inosine/xanthosine triphosphatase">
    <location>
        <begin position="1"/>
        <end position="176"/>
    </location>
</feature>
<feature type="binding site" evidence="1">
    <location>
        <position position="36"/>
    </location>
    <ligand>
        <name>Mg(2+)</name>
        <dbReference type="ChEBI" id="CHEBI:18420"/>
    </ligand>
</feature>